<feature type="chain" id="PRO_0000111763" description="Uncharacterized HTH-type transcriptional regulator PYRAB09690">
    <location>
        <begin position="1"/>
        <end position="162"/>
    </location>
</feature>
<feature type="domain" description="HTH asnC-type" evidence="1">
    <location>
        <begin position="6"/>
        <end position="71"/>
    </location>
</feature>
<feature type="DNA-binding region" description="H-T-H motif" evidence="1">
    <location>
        <begin position="25"/>
        <end position="44"/>
    </location>
</feature>
<sequence length="162" mass="18288">MTNASLDDLDRAILKLLKKDARLTIAEISNQLKKPESTVHFRIKKLQERGIIEKYTIIVGEPIKPRKLALVVLEIDMPIIEDFLERYIEYVTKTLSGFSEVLFVAKSGKEKIVALVGGESEESLLKFIEDNIESIPTLRNVMVFPISEIKKGDEIAGFLAEV</sequence>
<organism>
    <name type="scientific">Pyrococcus abyssi (strain GE5 / Orsay)</name>
    <dbReference type="NCBI Taxonomy" id="272844"/>
    <lineage>
        <taxon>Archaea</taxon>
        <taxon>Methanobacteriati</taxon>
        <taxon>Methanobacteriota</taxon>
        <taxon>Thermococci</taxon>
        <taxon>Thermococcales</taxon>
        <taxon>Thermococcaceae</taxon>
        <taxon>Pyrococcus</taxon>
    </lineage>
</organism>
<protein>
    <recommendedName>
        <fullName>Uncharacterized HTH-type transcriptional regulator PYRAB09690</fullName>
    </recommendedName>
</protein>
<reference key="1">
    <citation type="journal article" date="2003" name="Mol. Microbiol.">
        <title>An integrated analysis of the genome of the hyperthermophilic archaeon Pyrococcus abyssi.</title>
        <authorList>
            <person name="Cohen G.N."/>
            <person name="Barbe V."/>
            <person name="Flament D."/>
            <person name="Galperin M."/>
            <person name="Heilig R."/>
            <person name="Lecompte O."/>
            <person name="Poch O."/>
            <person name="Prieur D."/>
            <person name="Querellou J."/>
            <person name="Ripp R."/>
            <person name="Thierry J.-C."/>
            <person name="Van der Oost J."/>
            <person name="Weissenbach J."/>
            <person name="Zivanovic Y."/>
            <person name="Forterre P."/>
        </authorList>
    </citation>
    <scope>NUCLEOTIDE SEQUENCE [LARGE SCALE GENOMIC DNA]</scope>
    <source>
        <strain>GE5 / Orsay</strain>
    </source>
</reference>
<reference key="2">
    <citation type="journal article" date="2012" name="Curr. Microbiol.">
        <title>Re-annotation of two hyperthermophilic archaea Pyrococcus abyssi GE5 and Pyrococcus furiosus DSM 3638.</title>
        <authorList>
            <person name="Gao J."/>
            <person name="Wang J."/>
        </authorList>
    </citation>
    <scope>GENOME REANNOTATION</scope>
    <source>
        <strain>GE5 / Orsay</strain>
    </source>
</reference>
<dbReference type="EMBL" id="AJ248286">
    <property type="protein sequence ID" value="CAB49877.1"/>
    <property type="molecule type" value="Genomic_DNA"/>
</dbReference>
<dbReference type="EMBL" id="HE613800">
    <property type="protein sequence ID" value="CCE70375.1"/>
    <property type="molecule type" value="Genomic_DNA"/>
</dbReference>
<dbReference type="PIR" id="H75071">
    <property type="entry name" value="H75071"/>
</dbReference>
<dbReference type="RefSeq" id="WP_010868086.1">
    <property type="nucleotide sequence ID" value="NC_000868.1"/>
</dbReference>
<dbReference type="SMR" id="Q9V029"/>
<dbReference type="STRING" id="272844.PAB0652"/>
<dbReference type="KEGG" id="pab:PAB0652"/>
<dbReference type="PATRIC" id="fig|272844.11.peg.1021"/>
<dbReference type="eggNOG" id="arCOG01585">
    <property type="taxonomic scope" value="Archaea"/>
</dbReference>
<dbReference type="HOGENOM" id="CLU_091233_5_4_2"/>
<dbReference type="OrthoDB" id="6762at2157"/>
<dbReference type="PhylomeDB" id="Q9V029"/>
<dbReference type="Proteomes" id="UP000000810">
    <property type="component" value="Chromosome"/>
</dbReference>
<dbReference type="Proteomes" id="UP000009139">
    <property type="component" value="Chromosome"/>
</dbReference>
<dbReference type="GO" id="GO:0043565">
    <property type="term" value="F:sequence-specific DNA binding"/>
    <property type="evidence" value="ECO:0007669"/>
    <property type="project" value="InterPro"/>
</dbReference>
<dbReference type="CDD" id="cd00090">
    <property type="entry name" value="HTH_ARSR"/>
    <property type="match status" value="1"/>
</dbReference>
<dbReference type="Gene3D" id="3.30.70.920">
    <property type="match status" value="1"/>
</dbReference>
<dbReference type="Gene3D" id="1.10.10.10">
    <property type="entry name" value="Winged helix-like DNA-binding domain superfamily/Winged helix DNA-binding domain"/>
    <property type="match status" value="1"/>
</dbReference>
<dbReference type="InterPro" id="IPR011991">
    <property type="entry name" value="ArsR-like_HTH"/>
</dbReference>
<dbReference type="InterPro" id="IPR000485">
    <property type="entry name" value="AsnC-type_HTH_dom"/>
</dbReference>
<dbReference type="InterPro" id="IPR050684">
    <property type="entry name" value="HTH-Siroheme_Decarb"/>
</dbReference>
<dbReference type="InterPro" id="IPR054609">
    <property type="entry name" value="PF0864-like_C"/>
</dbReference>
<dbReference type="InterPro" id="IPR019888">
    <property type="entry name" value="Tscrpt_reg_AsnC-like"/>
</dbReference>
<dbReference type="InterPro" id="IPR036388">
    <property type="entry name" value="WH-like_DNA-bd_sf"/>
</dbReference>
<dbReference type="InterPro" id="IPR036390">
    <property type="entry name" value="WH_DNA-bd_sf"/>
</dbReference>
<dbReference type="PANTHER" id="PTHR43413:SF7">
    <property type="entry name" value="HTH-TYPE TRANSCRIPTIONAL REGULATOR PTR2"/>
    <property type="match status" value="1"/>
</dbReference>
<dbReference type="PANTHER" id="PTHR43413">
    <property type="entry name" value="TRANSCRIPTIONAL REGULATOR, ASNC FAMILY"/>
    <property type="match status" value="1"/>
</dbReference>
<dbReference type="Pfam" id="PF22482">
    <property type="entry name" value="AsnC_trans_reg_3"/>
    <property type="match status" value="1"/>
</dbReference>
<dbReference type="Pfam" id="PF13412">
    <property type="entry name" value="HTH_24"/>
    <property type="match status" value="1"/>
</dbReference>
<dbReference type="PRINTS" id="PR00033">
    <property type="entry name" value="HTHASNC"/>
</dbReference>
<dbReference type="SMART" id="SM00344">
    <property type="entry name" value="HTH_ASNC"/>
    <property type="match status" value="1"/>
</dbReference>
<dbReference type="SUPFAM" id="SSF46785">
    <property type="entry name" value="Winged helix' DNA-binding domain"/>
    <property type="match status" value="1"/>
</dbReference>
<dbReference type="PROSITE" id="PS50956">
    <property type="entry name" value="HTH_ASNC_2"/>
    <property type="match status" value="1"/>
</dbReference>
<accession>Q9V029</accession>
<accession>G8ZID4</accession>
<gene>
    <name type="ordered locus">PYRAB09690</name>
    <name type="ORF">PAB0652</name>
</gene>
<keyword id="KW-0238">DNA-binding</keyword>
<keyword id="KW-0804">Transcription</keyword>
<keyword id="KW-0805">Transcription regulation</keyword>
<proteinExistence type="predicted"/>
<evidence type="ECO:0000255" key="1">
    <source>
        <dbReference type="PROSITE-ProRule" id="PRU00319"/>
    </source>
</evidence>
<name>REG4_PYRAB</name>